<feature type="chain" id="PRO_0000116985" description="Adenosylhomocysteinase">
    <location>
        <begin position="1"/>
        <end position="463"/>
    </location>
</feature>
<feature type="binding site" evidence="1">
    <location>
        <position position="54"/>
    </location>
    <ligand>
        <name>substrate</name>
    </ligand>
</feature>
<feature type="binding site" evidence="1">
    <location>
        <position position="128"/>
    </location>
    <ligand>
        <name>substrate</name>
    </ligand>
</feature>
<feature type="binding site" evidence="1">
    <location>
        <position position="189"/>
    </location>
    <ligand>
        <name>substrate</name>
    </ligand>
</feature>
<feature type="binding site" evidence="1">
    <location>
        <begin position="190"/>
        <end position="192"/>
    </location>
    <ligand>
        <name>NAD(+)</name>
        <dbReference type="ChEBI" id="CHEBI:57540"/>
    </ligand>
</feature>
<feature type="binding site" evidence="1">
    <location>
        <position position="219"/>
    </location>
    <ligand>
        <name>substrate</name>
    </ligand>
</feature>
<feature type="binding site" evidence="1">
    <location>
        <position position="223"/>
    </location>
    <ligand>
        <name>substrate</name>
    </ligand>
</feature>
<feature type="binding site" evidence="1">
    <location>
        <position position="224"/>
    </location>
    <ligand>
        <name>NAD(+)</name>
        <dbReference type="ChEBI" id="CHEBI:57540"/>
    </ligand>
</feature>
<feature type="binding site" evidence="1">
    <location>
        <begin position="253"/>
        <end position="258"/>
    </location>
    <ligand>
        <name>NAD(+)</name>
        <dbReference type="ChEBI" id="CHEBI:57540"/>
    </ligand>
</feature>
<feature type="binding site" evidence="1">
    <location>
        <position position="276"/>
    </location>
    <ligand>
        <name>NAD(+)</name>
        <dbReference type="ChEBI" id="CHEBI:57540"/>
    </ligand>
</feature>
<feature type="binding site" evidence="1">
    <location>
        <position position="311"/>
    </location>
    <ligand>
        <name>NAD(+)</name>
        <dbReference type="ChEBI" id="CHEBI:57540"/>
    </ligand>
</feature>
<feature type="binding site" evidence="1">
    <location>
        <begin position="332"/>
        <end position="334"/>
    </location>
    <ligand>
        <name>NAD(+)</name>
        <dbReference type="ChEBI" id="CHEBI:57540"/>
    </ligand>
</feature>
<feature type="binding site" evidence="1">
    <location>
        <position position="377"/>
    </location>
    <ligand>
        <name>NAD(+)</name>
        <dbReference type="ChEBI" id="CHEBI:57540"/>
    </ligand>
</feature>
<name>SAHH_CERSP</name>
<comment type="function">
    <text evidence="1">May play a key role in the regulation of the intracellular concentration of adenosylhomocysteine.</text>
</comment>
<comment type="catalytic activity">
    <reaction evidence="1">
        <text>S-adenosyl-L-homocysteine + H2O = L-homocysteine + adenosine</text>
        <dbReference type="Rhea" id="RHEA:21708"/>
        <dbReference type="ChEBI" id="CHEBI:15377"/>
        <dbReference type="ChEBI" id="CHEBI:16335"/>
        <dbReference type="ChEBI" id="CHEBI:57856"/>
        <dbReference type="ChEBI" id="CHEBI:58199"/>
        <dbReference type="EC" id="3.13.2.1"/>
    </reaction>
</comment>
<comment type="cofactor">
    <cofactor evidence="1">
        <name>NAD(+)</name>
        <dbReference type="ChEBI" id="CHEBI:57540"/>
    </cofactor>
    <text evidence="1">Binds 1 NAD(+) per subunit.</text>
</comment>
<comment type="pathway">
    <text evidence="1">Amino-acid biosynthesis; L-homocysteine biosynthesis; L-homocysteine from S-adenosyl-L-homocysteine: step 1/1.</text>
</comment>
<comment type="subcellular location">
    <subcellularLocation>
        <location evidence="1">Cytoplasm</location>
    </subcellularLocation>
</comment>
<comment type="similarity">
    <text evidence="1">Belongs to the adenosylhomocysteinase family.</text>
</comment>
<dbReference type="EC" id="3.13.2.1" evidence="1"/>
<dbReference type="EMBL" id="U76671">
    <property type="protein sequence ID" value="AAB88245.1"/>
    <property type="molecule type" value="Genomic_DNA"/>
</dbReference>
<dbReference type="SMR" id="O50562"/>
<dbReference type="UniPathway" id="UPA00314">
    <property type="reaction ID" value="UER00076"/>
</dbReference>
<dbReference type="GO" id="GO:0005829">
    <property type="term" value="C:cytosol"/>
    <property type="evidence" value="ECO:0007669"/>
    <property type="project" value="TreeGrafter"/>
</dbReference>
<dbReference type="GO" id="GO:0004013">
    <property type="term" value="F:adenosylhomocysteinase activity"/>
    <property type="evidence" value="ECO:0007669"/>
    <property type="project" value="UniProtKB-UniRule"/>
</dbReference>
<dbReference type="GO" id="GO:0071269">
    <property type="term" value="P:L-homocysteine biosynthetic process"/>
    <property type="evidence" value="ECO:0007669"/>
    <property type="project" value="UniProtKB-UniRule"/>
</dbReference>
<dbReference type="GO" id="GO:0006730">
    <property type="term" value="P:one-carbon metabolic process"/>
    <property type="evidence" value="ECO:0007669"/>
    <property type="project" value="UniProtKB-KW"/>
</dbReference>
<dbReference type="GO" id="GO:0033353">
    <property type="term" value="P:S-adenosylmethionine cycle"/>
    <property type="evidence" value="ECO:0007669"/>
    <property type="project" value="TreeGrafter"/>
</dbReference>
<dbReference type="CDD" id="cd00401">
    <property type="entry name" value="SAHH"/>
    <property type="match status" value="1"/>
</dbReference>
<dbReference type="FunFam" id="3.40.50.720:FF:000004">
    <property type="entry name" value="Adenosylhomocysteinase"/>
    <property type="match status" value="1"/>
</dbReference>
<dbReference type="Gene3D" id="3.40.50.1480">
    <property type="entry name" value="Adenosylhomocysteinase-like"/>
    <property type="match status" value="1"/>
</dbReference>
<dbReference type="Gene3D" id="3.40.50.720">
    <property type="entry name" value="NAD(P)-binding Rossmann-like Domain"/>
    <property type="match status" value="1"/>
</dbReference>
<dbReference type="HAMAP" id="MF_00563">
    <property type="entry name" value="AdoHcyase"/>
    <property type="match status" value="1"/>
</dbReference>
<dbReference type="InterPro" id="IPR042172">
    <property type="entry name" value="Adenosylhomocyst_ase-like_sf"/>
</dbReference>
<dbReference type="InterPro" id="IPR000043">
    <property type="entry name" value="Adenosylhomocysteinase-like"/>
</dbReference>
<dbReference type="InterPro" id="IPR015878">
    <property type="entry name" value="Ado_hCys_hydrolase_NAD-bd"/>
</dbReference>
<dbReference type="InterPro" id="IPR036291">
    <property type="entry name" value="NAD(P)-bd_dom_sf"/>
</dbReference>
<dbReference type="InterPro" id="IPR020082">
    <property type="entry name" value="S-Ado-L-homoCys_hydrolase_CS"/>
</dbReference>
<dbReference type="NCBIfam" id="TIGR00936">
    <property type="entry name" value="ahcY"/>
    <property type="match status" value="1"/>
</dbReference>
<dbReference type="NCBIfam" id="NF004005">
    <property type="entry name" value="PRK05476.2-3"/>
    <property type="match status" value="1"/>
</dbReference>
<dbReference type="PANTHER" id="PTHR23420">
    <property type="entry name" value="ADENOSYLHOMOCYSTEINASE"/>
    <property type="match status" value="1"/>
</dbReference>
<dbReference type="PANTHER" id="PTHR23420:SF0">
    <property type="entry name" value="ADENOSYLHOMOCYSTEINASE"/>
    <property type="match status" value="1"/>
</dbReference>
<dbReference type="Pfam" id="PF05221">
    <property type="entry name" value="AdoHcyase"/>
    <property type="match status" value="1"/>
</dbReference>
<dbReference type="Pfam" id="PF00670">
    <property type="entry name" value="AdoHcyase_NAD"/>
    <property type="match status" value="1"/>
</dbReference>
<dbReference type="PIRSF" id="PIRSF001109">
    <property type="entry name" value="Ad_hcy_hydrolase"/>
    <property type="match status" value="1"/>
</dbReference>
<dbReference type="SMART" id="SM00996">
    <property type="entry name" value="AdoHcyase"/>
    <property type="match status" value="1"/>
</dbReference>
<dbReference type="SMART" id="SM00997">
    <property type="entry name" value="AdoHcyase_NAD"/>
    <property type="match status" value="1"/>
</dbReference>
<dbReference type="SUPFAM" id="SSF52283">
    <property type="entry name" value="Formate/glycerate dehydrogenase catalytic domain-like"/>
    <property type="match status" value="1"/>
</dbReference>
<dbReference type="SUPFAM" id="SSF51735">
    <property type="entry name" value="NAD(P)-binding Rossmann-fold domains"/>
    <property type="match status" value="1"/>
</dbReference>
<dbReference type="PROSITE" id="PS00738">
    <property type="entry name" value="ADOHCYASE_1"/>
    <property type="match status" value="1"/>
</dbReference>
<dbReference type="PROSITE" id="PS00739">
    <property type="entry name" value="ADOHCYASE_2"/>
    <property type="match status" value="1"/>
</dbReference>
<proteinExistence type="inferred from homology"/>
<gene>
    <name evidence="1" type="primary">ahcY</name>
</gene>
<organism>
    <name type="scientific">Cereibacter sphaeroides</name>
    <name type="common">Rhodobacter sphaeroides</name>
    <dbReference type="NCBI Taxonomy" id="1063"/>
    <lineage>
        <taxon>Bacteria</taxon>
        <taxon>Pseudomonadati</taxon>
        <taxon>Pseudomonadota</taxon>
        <taxon>Alphaproteobacteria</taxon>
        <taxon>Rhodobacterales</taxon>
        <taxon>Paracoccaceae</taxon>
        <taxon>Cereibacter</taxon>
    </lineage>
</organism>
<protein>
    <recommendedName>
        <fullName evidence="1">Adenosylhomocysteinase</fullName>
        <ecNumber evidence="1">3.13.2.1</ecNumber>
    </recommendedName>
    <alternativeName>
        <fullName evidence="1">S-adenosyl-L-homocysteine hydrolase</fullName>
        <shortName evidence="1">AdoHcyase</shortName>
    </alternativeName>
</protein>
<evidence type="ECO:0000255" key="1">
    <source>
        <dbReference type="HAMAP-Rule" id="MF_00563"/>
    </source>
</evidence>
<keyword id="KW-0963">Cytoplasm</keyword>
<keyword id="KW-0378">Hydrolase</keyword>
<keyword id="KW-0520">NAD</keyword>
<keyword id="KW-0554">One-carbon metabolism</keyword>
<accession>O50562</accession>
<reference key="1">
    <citation type="journal article" date="1997" name="Plant Cell Physiol.">
        <title>Nucleotide sequence and transcriptional analysis of the flanking region of the gene (spb) for the trans-acting factor that controls light-mediated expression of the puf operon in Rhodobacter sphaeroides.</title>
        <authorList>
            <person name="Mizoguchi H."/>
            <person name="Masuda T."/>
            <person name="Nishimura K."/>
            <person name="Shimada H."/>
            <person name="Ohta H."/>
            <person name="Shioi Y."/>
            <person name="Takamiya K."/>
        </authorList>
    </citation>
    <scope>NUCLEOTIDE SEQUENCE [GENOMIC DNA]</scope>
</reference>
<sequence length="463" mass="50617">MADFIVKDLSLADFGRKELDIAETEMPGLMALREEFGASKPLKGARIAGSLHMTVQTAVLIETLVALGADVRWASCNIFSTQDHAAAAIAASGVPVFAIKGETLEDYWAYTDKIFQFADGTCNMILDDGGDATLYILLGARVEAGETDLIAVPQSDEEVCLFNQIRKRMAETPGWFTKQRDAIKGVSEETTTGVHRLYDLHKKGLLPFPAINVNDSVTKSKFDNKYGCKESLVDGIRRATDVMMAGKVAVVCGYGDVGKGSAASLRGAGARVKVTEVDPICALQAAMDGFEVVVLEDVVQDADIFITTTGNRDVIRIEHMREMKDMAIVGNIGHFDNEIQVAALKNHKWTNIKDQVDMIEMPSGSRIILLSEGRLLNLGNATGHPSFVMSASFTNQVLAQIELWTKGADYQPGVYILPKALDEKVARLHLKKIGVKLTDVRPEQADYIGVKVEGPFKAEHYRY</sequence>